<name>AROA_HAEIG</name>
<evidence type="ECO:0000255" key="1">
    <source>
        <dbReference type="HAMAP-Rule" id="MF_00210"/>
    </source>
</evidence>
<gene>
    <name evidence="1" type="primary">aroA</name>
    <name type="ordered locus">CGSHiGG_10170</name>
</gene>
<protein>
    <recommendedName>
        <fullName evidence="1">3-phosphoshikimate 1-carboxyvinyltransferase</fullName>
        <ecNumber evidence="1">2.5.1.19</ecNumber>
    </recommendedName>
    <alternativeName>
        <fullName evidence="1">5-enolpyruvylshikimate-3-phosphate synthase</fullName>
        <shortName evidence="1">EPSP synthase</shortName>
        <shortName evidence="1">EPSPS</shortName>
    </alternativeName>
</protein>
<reference key="1">
    <citation type="journal article" date="2007" name="Genome Biol.">
        <title>Characterization and modeling of the Haemophilus influenzae core and supragenomes based on the complete genomic sequences of Rd and 12 clinical nontypeable strains.</title>
        <authorList>
            <person name="Hogg J.S."/>
            <person name="Hu F.Z."/>
            <person name="Janto B."/>
            <person name="Boissy R."/>
            <person name="Hayes J."/>
            <person name="Keefe R."/>
            <person name="Post J.C."/>
            <person name="Ehrlich G.D."/>
        </authorList>
    </citation>
    <scope>NUCLEOTIDE SEQUENCE [LARGE SCALE GENOMIC DNA]</scope>
    <source>
        <strain>PittGG</strain>
    </source>
</reference>
<comment type="function">
    <text evidence="1">Catalyzes the transfer of the enolpyruvyl moiety of phosphoenolpyruvate (PEP) to the 5-hydroxyl of shikimate-3-phosphate (S3P) to produce enolpyruvyl shikimate-3-phosphate and inorganic phosphate.</text>
</comment>
<comment type="catalytic activity">
    <reaction evidence="1">
        <text>3-phosphoshikimate + phosphoenolpyruvate = 5-O-(1-carboxyvinyl)-3-phosphoshikimate + phosphate</text>
        <dbReference type="Rhea" id="RHEA:21256"/>
        <dbReference type="ChEBI" id="CHEBI:43474"/>
        <dbReference type="ChEBI" id="CHEBI:57701"/>
        <dbReference type="ChEBI" id="CHEBI:58702"/>
        <dbReference type="ChEBI" id="CHEBI:145989"/>
        <dbReference type="EC" id="2.5.1.19"/>
    </reaction>
    <physiologicalReaction direction="left-to-right" evidence="1">
        <dbReference type="Rhea" id="RHEA:21257"/>
    </physiologicalReaction>
</comment>
<comment type="pathway">
    <text evidence="1">Metabolic intermediate biosynthesis; chorismate biosynthesis; chorismate from D-erythrose 4-phosphate and phosphoenolpyruvate: step 6/7.</text>
</comment>
<comment type="subunit">
    <text evidence="1">Monomer.</text>
</comment>
<comment type="subcellular location">
    <subcellularLocation>
        <location evidence="1">Cytoplasm</location>
    </subcellularLocation>
</comment>
<comment type="similarity">
    <text evidence="1">Belongs to the EPSP synthase family.</text>
</comment>
<accession>A5UJ35</accession>
<sequence length="432" mass="47508">MEKITLAPISAVEGTINLPGSKSLSNRALLLAALAKGTTKVTNLLDSDDIRHMLNALKALGVRYQLSDDKTICEIEGLGGAFNIQNNLSLFLGNAGTAMRPLTAALCLKGKTESEIILTGEPRMKERPILHLVDALRQAGADIRYLENEGYPPLAIRNKGIKGGKVKIDGSISSQFLTALLMSTPLAENDTEIEIIGELVSKPYIDITLAMMRDFGVKVENHHYQKFQVKGNQSYISPNKYLVEGDASSASYFLAAGAIKGKVKVTGIGKNSIQGDRLFADVLEKMGAKITWGEDFIQAEYAELNGIDMDMNHIPDAAMTIATTALFANGETVIRNIYNWRVKETDRLTAMATELRKIGAEVEEGEDFIRIQPLPLNQFKHANIETYNDHRMAMCFSLIALSNTPVTILDPKCTAKTFPTFFNEFEKICLKN</sequence>
<dbReference type="EC" id="2.5.1.19" evidence="1"/>
<dbReference type="EMBL" id="CP000672">
    <property type="protein sequence ID" value="ABR00791.1"/>
    <property type="molecule type" value="Genomic_DNA"/>
</dbReference>
<dbReference type="SMR" id="A5UJ35"/>
<dbReference type="KEGG" id="hiq:CGSHiGG_10170"/>
<dbReference type="HOGENOM" id="CLU_024321_0_0_6"/>
<dbReference type="UniPathway" id="UPA00053">
    <property type="reaction ID" value="UER00089"/>
</dbReference>
<dbReference type="Proteomes" id="UP000001990">
    <property type="component" value="Chromosome"/>
</dbReference>
<dbReference type="GO" id="GO:0005737">
    <property type="term" value="C:cytoplasm"/>
    <property type="evidence" value="ECO:0007669"/>
    <property type="project" value="UniProtKB-SubCell"/>
</dbReference>
<dbReference type="GO" id="GO:0003866">
    <property type="term" value="F:3-phosphoshikimate 1-carboxyvinyltransferase activity"/>
    <property type="evidence" value="ECO:0007669"/>
    <property type="project" value="UniProtKB-UniRule"/>
</dbReference>
<dbReference type="GO" id="GO:0008652">
    <property type="term" value="P:amino acid biosynthetic process"/>
    <property type="evidence" value="ECO:0007669"/>
    <property type="project" value="UniProtKB-KW"/>
</dbReference>
<dbReference type="GO" id="GO:0009073">
    <property type="term" value="P:aromatic amino acid family biosynthetic process"/>
    <property type="evidence" value="ECO:0007669"/>
    <property type="project" value="UniProtKB-KW"/>
</dbReference>
<dbReference type="GO" id="GO:0009423">
    <property type="term" value="P:chorismate biosynthetic process"/>
    <property type="evidence" value="ECO:0007669"/>
    <property type="project" value="UniProtKB-UniRule"/>
</dbReference>
<dbReference type="CDD" id="cd01556">
    <property type="entry name" value="EPSP_synthase"/>
    <property type="match status" value="1"/>
</dbReference>
<dbReference type="FunFam" id="3.65.10.10:FF:000003">
    <property type="entry name" value="3-phosphoshikimate 1-carboxyvinyltransferase"/>
    <property type="match status" value="1"/>
</dbReference>
<dbReference type="FunFam" id="3.65.10.10:FF:000004">
    <property type="entry name" value="3-phosphoshikimate 1-carboxyvinyltransferase"/>
    <property type="match status" value="1"/>
</dbReference>
<dbReference type="Gene3D" id="3.65.10.10">
    <property type="entry name" value="Enolpyruvate transferase domain"/>
    <property type="match status" value="2"/>
</dbReference>
<dbReference type="HAMAP" id="MF_00210">
    <property type="entry name" value="EPSP_synth"/>
    <property type="match status" value="1"/>
</dbReference>
<dbReference type="InterPro" id="IPR001986">
    <property type="entry name" value="Enolpyruvate_Tfrase_dom"/>
</dbReference>
<dbReference type="InterPro" id="IPR036968">
    <property type="entry name" value="Enolpyruvate_Tfrase_sf"/>
</dbReference>
<dbReference type="InterPro" id="IPR006264">
    <property type="entry name" value="EPSP_synthase"/>
</dbReference>
<dbReference type="InterPro" id="IPR023193">
    <property type="entry name" value="EPSP_synthase_CS"/>
</dbReference>
<dbReference type="InterPro" id="IPR013792">
    <property type="entry name" value="RNA3'P_cycl/enolpyr_Trfase_a/b"/>
</dbReference>
<dbReference type="NCBIfam" id="TIGR01356">
    <property type="entry name" value="aroA"/>
    <property type="match status" value="1"/>
</dbReference>
<dbReference type="PANTHER" id="PTHR21090">
    <property type="entry name" value="AROM/DEHYDROQUINATE SYNTHASE"/>
    <property type="match status" value="1"/>
</dbReference>
<dbReference type="PANTHER" id="PTHR21090:SF5">
    <property type="entry name" value="PENTAFUNCTIONAL AROM POLYPEPTIDE"/>
    <property type="match status" value="1"/>
</dbReference>
<dbReference type="Pfam" id="PF00275">
    <property type="entry name" value="EPSP_synthase"/>
    <property type="match status" value="1"/>
</dbReference>
<dbReference type="PIRSF" id="PIRSF000505">
    <property type="entry name" value="EPSPS"/>
    <property type="match status" value="1"/>
</dbReference>
<dbReference type="SUPFAM" id="SSF55205">
    <property type="entry name" value="EPT/RTPC-like"/>
    <property type="match status" value="1"/>
</dbReference>
<dbReference type="PROSITE" id="PS00104">
    <property type="entry name" value="EPSP_SYNTHASE_1"/>
    <property type="match status" value="1"/>
</dbReference>
<dbReference type="PROSITE" id="PS00885">
    <property type="entry name" value="EPSP_SYNTHASE_2"/>
    <property type="match status" value="1"/>
</dbReference>
<proteinExistence type="inferred from homology"/>
<organism>
    <name type="scientific">Haemophilus influenzae (strain PittGG)</name>
    <dbReference type="NCBI Taxonomy" id="374931"/>
    <lineage>
        <taxon>Bacteria</taxon>
        <taxon>Pseudomonadati</taxon>
        <taxon>Pseudomonadota</taxon>
        <taxon>Gammaproteobacteria</taxon>
        <taxon>Pasteurellales</taxon>
        <taxon>Pasteurellaceae</taxon>
        <taxon>Haemophilus</taxon>
    </lineage>
</organism>
<keyword id="KW-0028">Amino-acid biosynthesis</keyword>
<keyword id="KW-0057">Aromatic amino acid biosynthesis</keyword>
<keyword id="KW-0963">Cytoplasm</keyword>
<keyword id="KW-0808">Transferase</keyword>
<feature type="chain" id="PRO_1000012439" description="3-phosphoshikimate 1-carboxyvinyltransferase">
    <location>
        <begin position="1"/>
        <end position="432"/>
    </location>
</feature>
<feature type="active site" description="Proton acceptor" evidence="1">
    <location>
        <position position="316"/>
    </location>
</feature>
<feature type="binding site" evidence="1">
    <location>
        <position position="22"/>
    </location>
    <ligand>
        <name>3-phosphoshikimate</name>
        <dbReference type="ChEBI" id="CHEBI:145989"/>
    </ligand>
</feature>
<feature type="binding site" evidence="1">
    <location>
        <position position="22"/>
    </location>
    <ligand>
        <name>phosphoenolpyruvate</name>
        <dbReference type="ChEBI" id="CHEBI:58702"/>
    </ligand>
</feature>
<feature type="binding site" evidence="1">
    <location>
        <position position="23"/>
    </location>
    <ligand>
        <name>3-phosphoshikimate</name>
        <dbReference type="ChEBI" id="CHEBI:145989"/>
    </ligand>
</feature>
<feature type="binding site" evidence="1">
    <location>
        <position position="27"/>
    </location>
    <ligand>
        <name>3-phosphoshikimate</name>
        <dbReference type="ChEBI" id="CHEBI:145989"/>
    </ligand>
</feature>
<feature type="binding site" evidence="1">
    <location>
        <position position="96"/>
    </location>
    <ligand>
        <name>phosphoenolpyruvate</name>
        <dbReference type="ChEBI" id="CHEBI:58702"/>
    </ligand>
</feature>
<feature type="binding site" evidence="1">
    <location>
        <position position="127"/>
    </location>
    <ligand>
        <name>phosphoenolpyruvate</name>
        <dbReference type="ChEBI" id="CHEBI:58702"/>
    </ligand>
</feature>
<feature type="binding site" evidence="1">
    <location>
        <position position="173"/>
    </location>
    <ligand>
        <name>3-phosphoshikimate</name>
        <dbReference type="ChEBI" id="CHEBI:145989"/>
    </ligand>
</feature>
<feature type="binding site" evidence="1">
    <location>
        <position position="174"/>
    </location>
    <ligand>
        <name>3-phosphoshikimate</name>
        <dbReference type="ChEBI" id="CHEBI:145989"/>
    </ligand>
</feature>
<feature type="binding site" evidence="1">
    <location>
        <position position="175"/>
    </location>
    <ligand>
        <name>3-phosphoshikimate</name>
        <dbReference type="ChEBI" id="CHEBI:145989"/>
    </ligand>
</feature>
<feature type="binding site" evidence="1">
    <location>
        <position position="175"/>
    </location>
    <ligand>
        <name>phosphoenolpyruvate</name>
        <dbReference type="ChEBI" id="CHEBI:58702"/>
    </ligand>
</feature>
<feature type="binding site" evidence="1">
    <location>
        <position position="201"/>
    </location>
    <ligand>
        <name>3-phosphoshikimate</name>
        <dbReference type="ChEBI" id="CHEBI:145989"/>
    </ligand>
</feature>
<feature type="binding site" evidence="1">
    <location>
        <position position="316"/>
    </location>
    <ligand>
        <name>3-phosphoshikimate</name>
        <dbReference type="ChEBI" id="CHEBI:145989"/>
    </ligand>
</feature>
<feature type="binding site" evidence="1">
    <location>
        <position position="339"/>
    </location>
    <ligand>
        <name>3-phosphoshikimate</name>
        <dbReference type="ChEBI" id="CHEBI:145989"/>
    </ligand>
</feature>
<feature type="binding site" evidence="1">
    <location>
        <position position="343"/>
    </location>
    <ligand>
        <name>3-phosphoshikimate</name>
        <dbReference type="ChEBI" id="CHEBI:145989"/>
    </ligand>
</feature>
<feature type="binding site" evidence="1">
    <location>
        <position position="347"/>
    </location>
    <ligand>
        <name>phosphoenolpyruvate</name>
        <dbReference type="ChEBI" id="CHEBI:58702"/>
    </ligand>
</feature>
<feature type="binding site" evidence="1">
    <location>
        <position position="391"/>
    </location>
    <ligand>
        <name>phosphoenolpyruvate</name>
        <dbReference type="ChEBI" id="CHEBI:58702"/>
    </ligand>
</feature>
<feature type="binding site" evidence="1">
    <location>
        <position position="416"/>
    </location>
    <ligand>
        <name>phosphoenolpyruvate</name>
        <dbReference type="ChEBI" id="CHEBI:58702"/>
    </ligand>
</feature>